<gene>
    <name type="primary">Mcm8</name>
</gene>
<sequence length="830" mass="91977">MSGAYRGRGFGRGRFQNWKRGRGGGNFSGRWRDRTDLSKAAGNHASEQASQPLLQQSTLDQFIPYKGWKLYFSEVYSNNSPLTEKIQAFEKFFTRHIDLYDKDEIERKGSILVDFKELTKDNEITNLIPDIENALRDAPEKTLACMGLAIHQVLTKDLERHAAELQAQEGLCNGGGTMVNVPHIYARVYNYEPLTHLKNIRATCYGKYISIRGTVVRVSNIKPLCTKMAFQCAACGEIQSFPLPDGKYNLPTKCPVPACRGRSFTPLRSSPLTVTMDWQLIKIQELMSDAQREAGRIPRTIECELVHDLVDSCVPGDTVTVTGIVKVSNSEEGSRSKNDKCMFLLYIEANSVSNSKGQKAQTAEDGCKHGTLMEFSLKDLYAIQEIQAEENLLKLIVNSLCPVIFGHELVKAGLMLALFGGSQKYADDKNRIPIRGDPHVLIVGDPGLGKSQMLQAACNVAPRGVYVCGNTATSSGLTVTLSKDSSSGDFALEAGALVLGDQGICGIDEFDKMGNQHQALLEAMEQQSISLAKAGVVCSLPARTSIIAAANPVGGHYNKARTVSENLKMGSALLSRFDLVFILLDTPNEQHDHLLSEHVIAIRAGKQRAVSSATVSRVLSQDSNTSVLEVVSEKPLSERLKVAPGEKTDPIPHQLLRKYIGYARQYVHPRLSTEAAQALQDFYLELRKQSQRVGSSPITTRQLESLIRLTEARARLELREEATKEDAEDIIEIMKHSMLGTYSDEFGNLDFERSQHGSGMSNRSTAKRFISALNSIAERTYNNIFQFHQLRQIAKELNIQVADFENFIGSLNDQGYLLKKGPKIYQLQTM</sequence>
<dbReference type="EC" id="3.6.4.12" evidence="2"/>
<dbReference type="EMBL" id="CH473949">
    <property type="protein sequence ID" value="EDL80275.1"/>
    <property type="molecule type" value="Genomic_DNA"/>
</dbReference>
<dbReference type="RefSeq" id="NP_001099984.1">
    <property type="nucleotide sequence ID" value="NM_001106514.1"/>
</dbReference>
<dbReference type="RefSeq" id="NP_001418446.1">
    <property type="nucleotide sequence ID" value="NM_001431517.1"/>
</dbReference>
<dbReference type="RefSeq" id="XP_006235136.1">
    <property type="nucleotide sequence ID" value="XM_006235074.3"/>
</dbReference>
<dbReference type="RefSeq" id="XP_008760385.1">
    <property type="nucleotide sequence ID" value="XM_008762163.2"/>
</dbReference>
<dbReference type="SMR" id="D3ZVK1"/>
<dbReference type="FunCoup" id="D3ZVK1">
    <property type="interactions" value="1954"/>
</dbReference>
<dbReference type="STRING" id="10116.ENSRNOP00000028898"/>
<dbReference type="PhosphoSitePlus" id="D3ZVK1"/>
<dbReference type="PaxDb" id="10116-ENSRNOP00000028898"/>
<dbReference type="Ensembl" id="ENSRNOT00000028898.6">
    <property type="protein sequence ID" value="ENSRNOP00000028898.5"/>
    <property type="gene ID" value="ENSRNOG00000021272.7"/>
</dbReference>
<dbReference type="GeneID" id="296178"/>
<dbReference type="KEGG" id="rno:296178"/>
<dbReference type="AGR" id="RGD:1305218"/>
<dbReference type="CTD" id="84515"/>
<dbReference type="RGD" id="1305218">
    <property type="gene designation" value="Mcm8"/>
</dbReference>
<dbReference type="eggNOG" id="KOG0480">
    <property type="taxonomic scope" value="Eukaryota"/>
</dbReference>
<dbReference type="GeneTree" id="ENSGT01110000267230"/>
<dbReference type="HOGENOM" id="CLU_000995_7_2_1"/>
<dbReference type="InParanoid" id="D3ZVK1"/>
<dbReference type="OMA" id="THTVDWQ"/>
<dbReference type="OrthoDB" id="46335at9989"/>
<dbReference type="TreeFam" id="TF323155"/>
<dbReference type="Reactome" id="R-RNO-176187">
    <property type="pathway name" value="Activation of ATR in response to replication stress"/>
</dbReference>
<dbReference type="Reactome" id="R-RNO-68689">
    <property type="pathway name" value="CDC6 association with the ORC:origin complex"/>
</dbReference>
<dbReference type="Reactome" id="R-RNO-68949">
    <property type="pathway name" value="Orc1 removal from chromatin"/>
</dbReference>
<dbReference type="Reactome" id="R-RNO-68962">
    <property type="pathway name" value="Activation of the pre-replicative complex"/>
</dbReference>
<dbReference type="PRO" id="PR:D3ZVK1"/>
<dbReference type="Proteomes" id="UP000002494">
    <property type="component" value="Chromosome 3"/>
</dbReference>
<dbReference type="Proteomes" id="UP000234681">
    <property type="component" value="Chromosome 3"/>
</dbReference>
<dbReference type="Bgee" id="ENSRNOG00000021272">
    <property type="expression patterns" value="Expressed in testis and 19 other cell types or tissues"/>
</dbReference>
<dbReference type="GO" id="GO:0005694">
    <property type="term" value="C:chromosome"/>
    <property type="evidence" value="ECO:0007669"/>
    <property type="project" value="UniProtKB-SubCell"/>
</dbReference>
<dbReference type="GO" id="GO:0042555">
    <property type="term" value="C:MCM complex"/>
    <property type="evidence" value="ECO:0000318"/>
    <property type="project" value="GO_Central"/>
</dbReference>
<dbReference type="GO" id="GO:0097362">
    <property type="term" value="C:MCM8-MCM9 complex"/>
    <property type="evidence" value="ECO:0000250"/>
    <property type="project" value="UniProtKB"/>
</dbReference>
<dbReference type="GO" id="GO:0005634">
    <property type="term" value="C:nucleus"/>
    <property type="evidence" value="ECO:0000266"/>
    <property type="project" value="RGD"/>
</dbReference>
<dbReference type="GO" id="GO:0005524">
    <property type="term" value="F:ATP binding"/>
    <property type="evidence" value="ECO:0007669"/>
    <property type="project" value="UniProtKB-KW"/>
</dbReference>
<dbReference type="GO" id="GO:0016887">
    <property type="term" value="F:ATP hydrolysis activity"/>
    <property type="evidence" value="ECO:0007669"/>
    <property type="project" value="InterPro"/>
</dbReference>
<dbReference type="GO" id="GO:0003682">
    <property type="term" value="F:chromatin binding"/>
    <property type="evidence" value="ECO:0000266"/>
    <property type="project" value="RGD"/>
</dbReference>
<dbReference type="GO" id="GO:0019899">
    <property type="term" value="F:enzyme binding"/>
    <property type="evidence" value="ECO:0000266"/>
    <property type="project" value="RGD"/>
</dbReference>
<dbReference type="GO" id="GO:0004386">
    <property type="term" value="F:helicase activity"/>
    <property type="evidence" value="ECO:0007669"/>
    <property type="project" value="UniProtKB-KW"/>
</dbReference>
<dbReference type="GO" id="GO:0032406">
    <property type="term" value="F:MutLbeta complex binding"/>
    <property type="evidence" value="ECO:0000266"/>
    <property type="project" value="RGD"/>
</dbReference>
<dbReference type="GO" id="GO:0032407">
    <property type="term" value="F:MutSalpha complex binding"/>
    <property type="evidence" value="ECO:0000266"/>
    <property type="project" value="RGD"/>
</dbReference>
<dbReference type="GO" id="GO:0032408">
    <property type="term" value="F:MutSbeta complex binding"/>
    <property type="evidence" value="ECO:0000266"/>
    <property type="project" value="RGD"/>
</dbReference>
<dbReference type="GO" id="GO:0003697">
    <property type="term" value="F:single-stranded DNA binding"/>
    <property type="evidence" value="ECO:0000318"/>
    <property type="project" value="GO_Central"/>
</dbReference>
<dbReference type="GO" id="GO:0006974">
    <property type="term" value="P:DNA damage response"/>
    <property type="evidence" value="ECO:0000250"/>
    <property type="project" value="UniProtKB"/>
</dbReference>
<dbReference type="GO" id="GO:0000724">
    <property type="term" value="P:double-strand break repair via homologous recombination"/>
    <property type="evidence" value="ECO:0000250"/>
    <property type="project" value="UniProtKB"/>
</dbReference>
<dbReference type="GO" id="GO:0007292">
    <property type="term" value="P:female gamete generation"/>
    <property type="evidence" value="ECO:0000250"/>
    <property type="project" value="UniProtKB"/>
</dbReference>
<dbReference type="GO" id="GO:0048232">
    <property type="term" value="P:male gamete generation"/>
    <property type="evidence" value="ECO:0000250"/>
    <property type="project" value="UniProtKB"/>
</dbReference>
<dbReference type="GO" id="GO:0071168">
    <property type="term" value="P:protein localization to chromatin"/>
    <property type="evidence" value="ECO:0000266"/>
    <property type="project" value="RGD"/>
</dbReference>
<dbReference type="GO" id="GO:0050821">
    <property type="term" value="P:protein stabilization"/>
    <property type="evidence" value="ECO:0000266"/>
    <property type="project" value="RGD"/>
</dbReference>
<dbReference type="GO" id="GO:0036298">
    <property type="term" value="P:recombinational interstrand cross-link repair"/>
    <property type="evidence" value="ECO:0000266"/>
    <property type="project" value="RGD"/>
</dbReference>
<dbReference type="CDD" id="cd17759">
    <property type="entry name" value="MCM8"/>
    <property type="match status" value="1"/>
</dbReference>
<dbReference type="CDD" id="cd22247">
    <property type="entry name" value="MCM8_WHD"/>
    <property type="match status" value="1"/>
</dbReference>
<dbReference type="FunFam" id="2.20.28.10:FF:000007">
    <property type="entry name" value="DNA helicase MCM8 isoform X1"/>
    <property type="match status" value="1"/>
</dbReference>
<dbReference type="FunFam" id="2.40.50.140:FF:000487">
    <property type="entry name" value="Minichromosome maintenance 8 homologous recombination repair factor"/>
    <property type="match status" value="1"/>
</dbReference>
<dbReference type="Gene3D" id="2.20.28.10">
    <property type="match status" value="1"/>
</dbReference>
<dbReference type="Gene3D" id="2.40.50.140">
    <property type="entry name" value="Nucleic acid-binding proteins"/>
    <property type="match status" value="1"/>
</dbReference>
<dbReference type="Gene3D" id="3.40.50.300">
    <property type="entry name" value="P-loop containing nucleotide triphosphate hydrolases"/>
    <property type="match status" value="1"/>
</dbReference>
<dbReference type="InterPro" id="IPR003593">
    <property type="entry name" value="AAA+_ATPase"/>
</dbReference>
<dbReference type="InterPro" id="IPR031327">
    <property type="entry name" value="MCM"/>
</dbReference>
<dbReference type="InterPro" id="IPR056875">
    <property type="entry name" value="MCM8/REC_WHD"/>
</dbReference>
<dbReference type="InterPro" id="IPR001208">
    <property type="entry name" value="MCM_dom"/>
</dbReference>
<dbReference type="InterPro" id="IPR041562">
    <property type="entry name" value="MCM_lid"/>
</dbReference>
<dbReference type="InterPro" id="IPR033762">
    <property type="entry name" value="MCM_OB"/>
</dbReference>
<dbReference type="InterPro" id="IPR012340">
    <property type="entry name" value="NA-bd_OB-fold"/>
</dbReference>
<dbReference type="InterPro" id="IPR027417">
    <property type="entry name" value="P-loop_NTPase"/>
</dbReference>
<dbReference type="PANTHER" id="PTHR11630:SF47">
    <property type="entry name" value="DNA HELICASE MCM8"/>
    <property type="match status" value="1"/>
</dbReference>
<dbReference type="PANTHER" id="PTHR11630">
    <property type="entry name" value="DNA REPLICATION LICENSING FACTOR MCM FAMILY MEMBER"/>
    <property type="match status" value="1"/>
</dbReference>
<dbReference type="Pfam" id="PF00493">
    <property type="entry name" value="MCM"/>
    <property type="match status" value="1"/>
</dbReference>
<dbReference type="Pfam" id="PF17855">
    <property type="entry name" value="MCM_lid"/>
    <property type="match status" value="1"/>
</dbReference>
<dbReference type="Pfam" id="PF17207">
    <property type="entry name" value="MCM_OB"/>
    <property type="match status" value="1"/>
</dbReference>
<dbReference type="Pfam" id="PF25051">
    <property type="entry name" value="WHD_MCM8"/>
    <property type="match status" value="1"/>
</dbReference>
<dbReference type="PRINTS" id="PR01657">
    <property type="entry name" value="MCMFAMILY"/>
</dbReference>
<dbReference type="SMART" id="SM00382">
    <property type="entry name" value="AAA"/>
    <property type="match status" value="1"/>
</dbReference>
<dbReference type="SMART" id="SM00350">
    <property type="entry name" value="MCM"/>
    <property type="match status" value="1"/>
</dbReference>
<dbReference type="SUPFAM" id="SSF50249">
    <property type="entry name" value="Nucleic acid-binding proteins"/>
    <property type="match status" value="1"/>
</dbReference>
<dbReference type="SUPFAM" id="SSF52540">
    <property type="entry name" value="P-loop containing nucleoside triphosphate hydrolases"/>
    <property type="match status" value="1"/>
</dbReference>
<dbReference type="PROSITE" id="PS50051">
    <property type="entry name" value="MCM_2"/>
    <property type="match status" value="1"/>
</dbReference>
<evidence type="ECO:0000250" key="1">
    <source>
        <dbReference type="UniProtKB" id="Q9CWV1"/>
    </source>
</evidence>
<evidence type="ECO:0000250" key="2">
    <source>
        <dbReference type="UniProtKB" id="Q9UJA3"/>
    </source>
</evidence>
<evidence type="ECO:0000255" key="3"/>
<evidence type="ECO:0000305" key="4"/>
<protein>
    <recommendedName>
        <fullName>DNA helicase MCM8</fullName>
        <ecNumber evidence="2">3.6.4.12</ecNumber>
    </recommendedName>
    <alternativeName>
        <fullName>Minichromosome maintenance 8</fullName>
    </alternativeName>
</protein>
<reference key="1">
    <citation type="journal article" date="2004" name="Nature">
        <title>Genome sequence of the Brown Norway rat yields insights into mammalian evolution.</title>
        <authorList>
            <person name="Gibbs R.A."/>
            <person name="Weinstock G.M."/>
            <person name="Metzker M.L."/>
            <person name="Muzny D.M."/>
            <person name="Sodergren E.J."/>
            <person name="Scherer S."/>
            <person name="Scott G."/>
            <person name="Steffen D."/>
            <person name="Worley K.C."/>
            <person name="Burch P.E."/>
            <person name="Okwuonu G."/>
            <person name="Hines S."/>
            <person name="Lewis L."/>
            <person name="Deramo C."/>
            <person name="Delgado O."/>
            <person name="Dugan-Rocha S."/>
            <person name="Miner G."/>
            <person name="Morgan M."/>
            <person name="Hawes A."/>
            <person name="Gill R."/>
            <person name="Holt R.A."/>
            <person name="Adams M.D."/>
            <person name="Amanatides P.G."/>
            <person name="Baden-Tillson H."/>
            <person name="Barnstead M."/>
            <person name="Chin S."/>
            <person name="Evans C.A."/>
            <person name="Ferriera S."/>
            <person name="Fosler C."/>
            <person name="Glodek A."/>
            <person name="Gu Z."/>
            <person name="Jennings D."/>
            <person name="Kraft C.L."/>
            <person name="Nguyen T."/>
            <person name="Pfannkoch C.M."/>
            <person name="Sitter C."/>
            <person name="Sutton G.G."/>
            <person name="Venter J.C."/>
            <person name="Woodage T."/>
            <person name="Smith D."/>
            <person name="Lee H.-M."/>
            <person name="Gustafson E."/>
            <person name="Cahill P."/>
            <person name="Kana A."/>
            <person name="Doucette-Stamm L."/>
            <person name="Weinstock K."/>
            <person name="Fechtel K."/>
            <person name="Weiss R.B."/>
            <person name="Dunn D.M."/>
            <person name="Green E.D."/>
            <person name="Blakesley R.W."/>
            <person name="Bouffard G.G."/>
            <person name="De Jong P.J."/>
            <person name="Osoegawa K."/>
            <person name="Zhu B."/>
            <person name="Marra M."/>
            <person name="Schein J."/>
            <person name="Bosdet I."/>
            <person name="Fjell C."/>
            <person name="Jones S."/>
            <person name="Krzywinski M."/>
            <person name="Mathewson C."/>
            <person name="Siddiqui A."/>
            <person name="Wye N."/>
            <person name="McPherson J."/>
            <person name="Zhao S."/>
            <person name="Fraser C.M."/>
            <person name="Shetty J."/>
            <person name="Shatsman S."/>
            <person name="Geer K."/>
            <person name="Chen Y."/>
            <person name="Abramzon S."/>
            <person name="Nierman W.C."/>
            <person name="Havlak P.H."/>
            <person name="Chen R."/>
            <person name="Durbin K.J."/>
            <person name="Egan A."/>
            <person name="Ren Y."/>
            <person name="Song X.-Z."/>
            <person name="Li B."/>
            <person name="Liu Y."/>
            <person name="Qin X."/>
            <person name="Cawley S."/>
            <person name="Cooney A.J."/>
            <person name="D'Souza L.M."/>
            <person name="Martin K."/>
            <person name="Wu J.Q."/>
            <person name="Gonzalez-Garay M.L."/>
            <person name="Jackson A.R."/>
            <person name="Kalafus K.J."/>
            <person name="McLeod M.P."/>
            <person name="Milosavljevic A."/>
            <person name="Virk D."/>
            <person name="Volkov A."/>
            <person name="Wheeler D.A."/>
            <person name="Zhang Z."/>
            <person name="Bailey J.A."/>
            <person name="Eichler E.E."/>
            <person name="Tuzun E."/>
            <person name="Birney E."/>
            <person name="Mongin E."/>
            <person name="Ureta-Vidal A."/>
            <person name="Woodwark C."/>
            <person name="Zdobnov E."/>
            <person name="Bork P."/>
            <person name="Suyama M."/>
            <person name="Torrents D."/>
            <person name="Alexandersson M."/>
            <person name="Trask B.J."/>
            <person name="Young J.M."/>
            <person name="Huang H."/>
            <person name="Wang H."/>
            <person name="Xing H."/>
            <person name="Daniels S."/>
            <person name="Gietzen D."/>
            <person name="Schmidt J."/>
            <person name="Stevens K."/>
            <person name="Vitt U."/>
            <person name="Wingrove J."/>
            <person name="Camara F."/>
            <person name="Mar Alba M."/>
            <person name="Abril J.F."/>
            <person name="Guigo R."/>
            <person name="Smit A."/>
            <person name="Dubchak I."/>
            <person name="Rubin E.M."/>
            <person name="Couronne O."/>
            <person name="Poliakov A."/>
            <person name="Huebner N."/>
            <person name="Ganten D."/>
            <person name="Goesele C."/>
            <person name="Hummel O."/>
            <person name="Kreitler T."/>
            <person name="Lee Y.-A."/>
            <person name="Monti J."/>
            <person name="Schulz H."/>
            <person name="Zimdahl H."/>
            <person name="Himmelbauer H."/>
            <person name="Lehrach H."/>
            <person name="Jacob H.J."/>
            <person name="Bromberg S."/>
            <person name="Gullings-Handley J."/>
            <person name="Jensen-Seaman M.I."/>
            <person name="Kwitek A.E."/>
            <person name="Lazar J."/>
            <person name="Pasko D."/>
            <person name="Tonellato P.J."/>
            <person name="Twigger S."/>
            <person name="Ponting C.P."/>
            <person name="Duarte J.M."/>
            <person name="Rice S."/>
            <person name="Goodstadt L."/>
            <person name="Beatson S.A."/>
            <person name="Emes R.D."/>
            <person name="Winter E.E."/>
            <person name="Webber C."/>
            <person name="Brandt P."/>
            <person name="Nyakatura G."/>
            <person name="Adetobi M."/>
            <person name="Chiaromonte F."/>
            <person name="Elnitski L."/>
            <person name="Eswara P."/>
            <person name="Hardison R.C."/>
            <person name="Hou M."/>
            <person name="Kolbe D."/>
            <person name="Makova K."/>
            <person name="Miller W."/>
            <person name="Nekrutenko A."/>
            <person name="Riemer C."/>
            <person name="Schwartz S."/>
            <person name="Taylor J."/>
            <person name="Yang S."/>
            <person name="Zhang Y."/>
            <person name="Lindpaintner K."/>
            <person name="Andrews T.D."/>
            <person name="Caccamo M."/>
            <person name="Clamp M."/>
            <person name="Clarke L."/>
            <person name="Curwen V."/>
            <person name="Durbin R.M."/>
            <person name="Eyras E."/>
            <person name="Searle S.M."/>
            <person name="Cooper G.M."/>
            <person name="Batzoglou S."/>
            <person name="Brudno M."/>
            <person name="Sidow A."/>
            <person name="Stone E.A."/>
            <person name="Payseur B.A."/>
            <person name="Bourque G."/>
            <person name="Lopez-Otin C."/>
            <person name="Puente X.S."/>
            <person name="Chakrabarti K."/>
            <person name="Chatterji S."/>
            <person name="Dewey C."/>
            <person name="Pachter L."/>
            <person name="Bray N."/>
            <person name="Yap V.B."/>
            <person name="Caspi A."/>
            <person name="Tesler G."/>
            <person name="Pevzner P.A."/>
            <person name="Haussler D."/>
            <person name="Roskin K.M."/>
            <person name="Baertsch R."/>
            <person name="Clawson H."/>
            <person name="Furey T.S."/>
            <person name="Hinrichs A.S."/>
            <person name="Karolchik D."/>
            <person name="Kent W.J."/>
            <person name="Rosenbloom K.R."/>
            <person name="Trumbower H."/>
            <person name="Weirauch M."/>
            <person name="Cooper D.N."/>
            <person name="Stenson P.D."/>
            <person name="Ma B."/>
            <person name="Brent M."/>
            <person name="Arumugam M."/>
            <person name="Shteynberg D."/>
            <person name="Copley R.R."/>
            <person name="Taylor M.S."/>
            <person name="Riethman H."/>
            <person name="Mudunuri U."/>
            <person name="Peterson J."/>
            <person name="Guyer M."/>
            <person name="Felsenfeld A."/>
            <person name="Old S."/>
            <person name="Mockrin S."/>
            <person name="Collins F.S."/>
        </authorList>
    </citation>
    <scope>NUCLEOTIDE SEQUENCE [LARGE SCALE GENOMIC DNA]</scope>
    <source>
        <strain>Brown Norway</strain>
    </source>
</reference>
<reference key="2">
    <citation type="submission" date="2005-07" db="EMBL/GenBank/DDBJ databases">
        <authorList>
            <person name="Mural R.J."/>
            <person name="Adams M.D."/>
            <person name="Myers E.W."/>
            <person name="Smith H.O."/>
            <person name="Venter J.C."/>
        </authorList>
    </citation>
    <scope>NUCLEOTIDE SEQUENCE [LARGE SCALE GENOMIC DNA]</scope>
    <source>
        <strain>Brown Norway</strain>
    </source>
</reference>
<organism>
    <name type="scientific">Rattus norvegicus</name>
    <name type="common">Rat</name>
    <dbReference type="NCBI Taxonomy" id="10116"/>
    <lineage>
        <taxon>Eukaryota</taxon>
        <taxon>Metazoa</taxon>
        <taxon>Chordata</taxon>
        <taxon>Craniata</taxon>
        <taxon>Vertebrata</taxon>
        <taxon>Euteleostomi</taxon>
        <taxon>Mammalia</taxon>
        <taxon>Eutheria</taxon>
        <taxon>Euarchontoglires</taxon>
        <taxon>Glires</taxon>
        <taxon>Rodentia</taxon>
        <taxon>Myomorpha</taxon>
        <taxon>Muroidea</taxon>
        <taxon>Muridae</taxon>
        <taxon>Murinae</taxon>
        <taxon>Rattus</taxon>
    </lineage>
</organism>
<comment type="function">
    <text evidence="1 2">Component of the MCM8-MCM9 complex, a complex involved in the repair of double-stranded DNA breaks (DBSs) and DNA interstrand cross-links (ICLs) by homologous recombination (HR). Required for DNA resection by the MRE11-RAD50-NBN/NBS1 (MRN) complex by recruiting the MRN complex to the repair site and by promoting the complex nuclease activity. Probably by regulating the localization of the MNR complex, indirectly regulates the recruitment of downstream effector RAD51 to DNA damage sites including DBSs and ICLs. The MCM8-MCM9 complex is dispensable for DNA replication and S phase progression. However, may play a non-essential for DNA replication: may be involved in the activation of the prereplicative complex (pre-RC) during G(1) phase by recruiting CDC6 to the origin recognition complex (ORC). Probably by regulating HR, plays a key role during gametogenesis. Stabilizes MCM9 protein.</text>
</comment>
<comment type="catalytic activity">
    <reaction evidence="2">
        <text>ATP + H2O = ADP + phosphate + H(+)</text>
        <dbReference type="Rhea" id="RHEA:13065"/>
        <dbReference type="ChEBI" id="CHEBI:15377"/>
        <dbReference type="ChEBI" id="CHEBI:15378"/>
        <dbReference type="ChEBI" id="CHEBI:30616"/>
        <dbReference type="ChEBI" id="CHEBI:43474"/>
        <dbReference type="ChEBI" id="CHEBI:456216"/>
        <dbReference type="EC" id="3.6.4.12"/>
    </reaction>
</comment>
<comment type="subunit">
    <text evidence="2">Component of the MCM8-MCM9 complex, which forms a hexamer composed of MCM8 and MCM9. Interacts with the DNA mismatch repair (MMR) complex composed at least of MSH2, MSH3, MSH6, PMS1 and MLH1. Interacts with RAD51; the interaction recruits RAD51 to DNA damage sites. Interacts with the MRN complex composed of MRE11, RAD50 and NBN/NBS1. Interacts with CDC6 and ORC2. Interacts with HROB; the interaction recruits the MCM8-MCM9 complex to DNA damage sites (By similarity).</text>
</comment>
<comment type="subcellular location">
    <subcellularLocation>
        <location evidence="2">Nucleus</location>
    </subcellularLocation>
    <subcellularLocation>
        <location evidence="2">Chromosome</location>
    </subcellularLocation>
    <text evidence="2">Localizes to nuclear foci. Localizes to double-stranded DNA breaks. Binds chromatin throughout the cell cycle.</text>
</comment>
<comment type="similarity">
    <text evidence="4">Belongs to the MCM family.</text>
</comment>
<name>MCM8_RAT</name>
<proteinExistence type="inferred from homology"/>
<accession>D3ZVK1</accession>
<keyword id="KW-0067">ATP-binding</keyword>
<keyword id="KW-0131">Cell cycle</keyword>
<keyword id="KW-0158">Chromosome</keyword>
<keyword id="KW-0227">DNA damage</keyword>
<keyword id="KW-0234">DNA repair</keyword>
<keyword id="KW-0235">DNA replication</keyword>
<keyword id="KW-0238">DNA-binding</keyword>
<keyword id="KW-0347">Helicase</keyword>
<keyword id="KW-0378">Hydrolase</keyword>
<keyword id="KW-0547">Nucleotide-binding</keyword>
<keyword id="KW-0539">Nucleus</keyword>
<keyword id="KW-0597">Phosphoprotein</keyword>
<keyword id="KW-1185">Reference proteome</keyword>
<feature type="chain" id="PRO_0000419471" description="DNA helicase MCM8">
    <location>
        <begin position="1"/>
        <end position="830"/>
    </location>
</feature>
<feature type="domain" description="MCM">
    <location>
        <begin position="392"/>
        <end position="599"/>
    </location>
</feature>
<feature type="binding site" evidence="3">
    <location>
        <begin position="444"/>
        <end position="451"/>
    </location>
    <ligand>
        <name>ATP</name>
        <dbReference type="ChEBI" id="CHEBI:30616"/>
    </ligand>
</feature>
<feature type="modified residue" description="Phosphoserine" evidence="2">
    <location>
        <position position="620"/>
    </location>
</feature>